<feature type="chain" id="PRO_0000289609" description="Gamma-crystallin C">
    <location>
        <begin position="1"/>
        <end position="174"/>
    </location>
</feature>
<feature type="domain" description="Beta/gamma crystallin 'Greek key' 1" evidence="2">
    <location>
        <begin position="2"/>
        <end position="40"/>
    </location>
</feature>
<feature type="domain" description="Beta/gamma crystallin 'Greek key' 2" evidence="2">
    <location>
        <begin position="41"/>
        <end position="83"/>
    </location>
</feature>
<feature type="domain" description="Beta/gamma crystallin 'Greek key' 3" evidence="2">
    <location>
        <begin position="88"/>
        <end position="128"/>
    </location>
</feature>
<feature type="domain" description="Beta/gamma crystallin 'Greek key' 4" evidence="2">
    <location>
        <begin position="129"/>
        <end position="171"/>
    </location>
</feature>
<feature type="region of interest" description="Connecting peptide">
    <location>
        <begin position="84"/>
        <end position="87"/>
    </location>
</feature>
<feature type="modified residue" description="S-methylcysteine" evidence="1">
    <location>
        <position position="23"/>
    </location>
</feature>
<reference key="1">
    <citation type="submission" date="2007-02" db="EMBL/GenBank/DDBJ databases">
        <title>Rhesus monkey gammaC-crystallin.</title>
        <authorList>
            <person name="Wistow G."/>
        </authorList>
    </citation>
    <scope>NUCLEOTIDE SEQUENCE [MRNA]</scope>
    <source>
        <tissue>Lens</tissue>
    </source>
</reference>
<proteinExistence type="evidence at transcript level"/>
<organism>
    <name type="scientific">Macaca mulatta</name>
    <name type="common">Rhesus macaque</name>
    <dbReference type="NCBI Taxonomy" id="9544"/>
    <lineage>
        <taxon>Eukaryota</taxon>
        <taxon>Metazoa</taxon>
        <taxon>Chordata</taxon>
        <taxon>Craniata</taxon>
        <taxon>Vertebrata</taxon>
        <taxon>Euteleostomi</taxon>
        <taxon>Mammalia</taxon>
        <taxon>Eutheria</taxon>
        <taxon>Euarchontoglires</taxon>
        <taxon>Primates</taxon>
        <taxon>Haplorrhini</taxon>
        <taxon>Catarrhini</taxon>
        <taxon>Cercopithecidae</taxon>
        <taxon>Cercopithecinae</taxon>
        <taxon>Macaca</taxon>
    </lineage>
</organism>
<evidence type="ECO:0000250" key="1"/>
<evidence type="ECO:0000255" key="2">
    <source>
        <dbReference type="PROSITE-ProRule" id="PRU00028"/>
    </source>
</evidence>
<evidence type="ECO:0000305" key="3"/>
<name>CRGC_MACMU</name>
<sequence length="174" mass="20730">MGKITLYEDKAFQGRSYESTTDCPNLQTYLSRCNSIRVESGCWMLYERPNYQGQQYLLRRGEYPDYQQWMGLSDSIRSCCLIPQTGSHRLRLYEREDHKGLMMELSEDCPSIQDRFHLSEIRSLHVLEGCWVLYELPNYRGRQYLLRPQEYRRCQDWGAMDAKAGSLRRVVDLY</sequence>
<comment type="function">
    <text evidence="1">Crystallins are the dominant structural components of the vertebrate eye lens.</text>
</comment>
<comment type="subunit">
    <text evidence="1">Monomer.</text>
</comment>
<comment type="domain">
    <text>Has a two-domain beta-structure, folded into four very similar Greek key motifs.</text>
</comment>
<comment type="similarity">
    <text evidence="3">Belongs to the beta/gamma-crystallin family.</text>
</comment>
<protein>
    <recommendedName>
        <fullName>Gamma-crystallin C</fullName>
    </recommendedName>
    <alternativeName>
        <fullName>Gamma-C-crystallin</fullName>
    </alternativeName>
</protein>
<dbReference type="EMBL" id="EF426305">
    <property type="protein sequence ID" value="ABO14690.1"/>
    <property type="molecule type" value="mRNA"/>
</dbReference>
<dbReference type="RefSeq" id="NP_001076433.1">
    <property type="nucleotide sequence ID" value="NM_001082964.1"/>
</dbReference>
<dbReference type="SMR" id="A3RLD8"/>
<dbReference type="FunCoup" id="A3RLD8">
    <property type="interactions" value="309"/>
</dbReference>
<dbReference type="STRING" id="9544.ENSMMUP00000072755"/>
<dbReference type="PaxDb" id="9544-ENSMMUP00000015388"/>
<dbReference type="Ensembl" id="ENSMMUT00000087819.1">
    <property type="protein sequence ID" value="ENSMMUP00000070892.1"/>
    <property type="gene ID" value="ENSMMUG00000056938.1"/>
</dbReference>
<dbReference type="GeneID" id="709553"/>
<dbReference type="KEGG" id="mcc:709553"/>
<dbReference type="CTD" id="1420"/>
<dbReference type="VEuPathDB" id="HostDB:ENSMMUG00000056938"/>
<dbReference type="eggNOG" id="ENOG502RXJY">
    <property type="taxonomic scope" value="Eukaryota"/>
</dbReference>
<dbReference type="GeneTree" id="ENSGT00940000159232"/>
<dbReference type="HOGENOM" id="CLU_081883_1_1_1"/>
<dbReference type="InParanoid" id="A3RLD8"/>
<dbReference type="OrthoDB" id="8407241at2759"/>
<dbReference type="Proteomes" id="UP000006718">
    <property type="component" value="Chromosome 12"/>
</dbReference>
<dbReference type="Bgee" id="ENSMMUG00000056938">
    <property type="expression patterns" value="Expressed in liver and 2 other cell types or tissues"/>
</dbReference>
<dbReference type="ExpressionAtlas" id="A3RLD8">
    <property type="expression patterns" value="baseline"/>
</dbReference>
<dbReference type="GO" id="GO:0005212">
    <property type="term" value="F:structural constituent of eye lens"/>
    <property type="evidence" value="ECO:0000318"/>
    <property type="project" value="GO_Central"/>
</dbReference>
<dbReference type="GO" id="GO:0002088">
    <property type="term" value="P:lens development in camera-type eye"/>
    <property type="evidence" value="ECO:0000318"/>
    <property type="project" value="GO_Central"/>
</dbReference>
<dbReference type="GO" id="GO:0007601">
    <property type="term" value="P:visual perception"/>
    <property type="evidence" value="ECO:0000318"/>
    <property type="project" value="GO_Central"/>
</dbReference>
<dbReference type="FunFam" id="2.60.20.10:FF:000001">
    <property type="entry name" value="Crystallin gamma S"/>
    <property type="match status" value="1"/>
</dbReference>
<dbReference type="FunFam" id="2.60.20.10:FF:000003">
    <property type="entry name" value="Crystallin gamma S"/>
    <property type="match status" value="1"/>
</dbReference>
<dbReference type="Gene3D" id="2.60.20.10">
    <property type="entry name" value="Crystallins"/>
    <property type="match status" value="2"/>
</dbReference>
<dbReference type="InterPro" id="IPR050252">
    <property type="entry name" value="Beta/Gamma-Crystallin"/>
</dbReference>
<dbReference type="InterPro" id="IPR001064">
    <property type="entry name" value="Beta/gamma_crystallin"/>
</dbReference>
<dbReference type="InterPro" id="IPR011024">
    <property type="entry name" value="G_crystallin-like"/>
</dbReference>
<dbReference type="PANTHER" id="PTHR11818">
    <property type="entry name" value="BETA/GAMMA CRYSTALLIN"/>
    <property type="match status" value="1"/>
</dbReference>
<dbReference type="PANTHER" id="PTHR11818:SF32">
    <property type="entry name" value="GAMMA-CRYSTALLIN C"/>
    <property type="match status" value="1"/>
</dbReference>
<dbReference type="Pfam" id="PF00030">
    <property type="entry name" value="Crystall"/>
    <property type="match status" value="2"/>
</dbReference>
<dbReference type="PRINTS" id="PR01367">
    <property type="entry name" value="BGCRYSTALLIN"/>
</dbReference>
<dbReference type="SMART" id="SM00247">
    <property type="entry name" value="XTALbg"/>
    <property type="match status" value="2"/>
</dbReference>
<dbReference type="SUPFAM" id="SSF49695">
    <property type="entry name" value="gamma-Crystallin-like"/>
    <property type="match status" value="1"/>
</dbReference>
<dbReference type="PROSITE" id="PS50915">
    <property type="entry name" value="CRYSTALLIN_BETA_GAMMA"/>
    <property type="match status" value="4"/>
</dbReference>
<keyword id="KW-0273">Eye lens protein</keyword>
<keyword id="KW-0488">Methylation</keyword>
<keyword id="KW-1185">Reference proteome</keyword>
<keyword id="KW-0677">Repeat</keyword>
<gene>
    <name type="primary">CRYGC</name>
</gene>
<accession>A3RLD8</accession>